<name>HEM3_BACC2</name>
<proteinExistence type="inferred from homology"/>
<comment type="function">
    <text evidence="1">Tetrapolymerization of the monopyrrole PBG into the hydroxymethylbilane pre-uroporphyrinogen in several discrete steps.</text>
</comment>
<comment type="catalytic activity">
    <reaction evidence="1">
        <text>4 porphobilinogen + H2O = hydroxymethylbilane + 4 NH4(+)</text>
        <dbReference type="Rhea" id="RHEA:13185"/>
        <dbReference type="ChEBI" id="CHEBI:15377"/>
        <dbReference type="ChEBI" id="CHEBI:28938"/>
        <dbReference type="ChEBI" id="CHEBI:57845"/>
        <dbReference type="ChEBI" id="CHEBI:58126"/>
        <dbReference type="EC" id="2.5.1.61"/>
    </reaction>
</comment>
<comment type="cofactor">
    <cofactor evidence="1">
        <name>dipyrromethane</name>
        <dbReference type="ChEBI" id="CHEBI:60342"/>
    </cofactor>
    <text evidence="1">Binds 1 dipyrromethane group covalently.</text>
</comment>
<comment type="pathway">
    <text evidence="1">Porphyrin-containing compound metabolism; protoporphyrin-IX biosynthesis; coproporphyrinogen-III from 5-aminolevulinate: step 2/4.</text>
</comment>
<comment type="subunit">
    <text evidence="1">Monomer.</text>
</comment>
<comment type="miscellaneous">
    <text evidence="1">The porphobilinogen subunits are added to the dipyrromethane group.</text>
</comment>
<comment type="similarity">
    <text evidence="1">Belongs to the HMBS family.</text>
</comment>
<keyword id="KW-0627">Porphyrin biosynthesis</keyword>
<keyword id="KW-0808">Transferase</keyword>
<dbReference type="EC" id="2.5.1.61" evidence="1"/>
<dbReference type="EMBL" id="CP001186">
    <property type="protein sequence ID" value="ACK98251.1"/>
    <property type="molecule type" value="Genomic_DNA"/>
</dbReference>
<dbReference type="RefSeq" id="WP_001226403.1">
    <property type="nucleotide sequence ID" value="NC_011772.1"/>
</dbReference>
<dbReference type="SMR" id="B7IIX5"/>
<dbReference type="KEGG" id="bcg:BCG9842_B0652"/>
<dbReference type="HOGENOM" id="CLU_019704_0_2_9"/>
<dbReference type="UniPathway" id="UPA00251">
    <property type="reaction ID" value="UER00319"/>
</dbReference>
<dbReference type="Proteomes" id="UP000006744">
    <property type="component" value="Chromosome"/>
</dbReference>
<dbReference type="GO" id="GO:0005737">
    <property type="term" value="C:cytoplasm"/>
    <property type="evidence" value="ECO:0007669"/>
    <property type="project" value="TreeGrafter"/>
</dbReference>
<dbReference type="GO" id="GO:0004418">
    <property type="term" value="F:hydroxymethylbilane synthase activity"/>
    <property type="evidence" value="ECO:0007669"/>
    <property type="project" value="UniProtKB-UniRule"/>
</dbReference>
<dbReference type="GO" id="GO:0006782">
    <property type="term" value="P:protoporphyrinogen IX biosynthetic process"/>
    <property type="evidence" value="ECO:0007669"/>
    <property type="project" value="UniProtKB-UniRule"/>
</dbReference>
<dbReference type="CDD" id="cd13646">
    <property type="entry name" value="PBP2_EcHMBS_like"/>
    <property type="match status" value="1"/>
</dbReference>
<dbReference type="FunFam" id="3.30.160.40:FF:000001">
    <property type="entry name" value="Porphobilinogen deaminase"/>
    <property type="match status" value="1"/>
</dbReference>
<dbReference type="FunFam" id="3.40.190.10:FF:000004">
    <property type="entry name" value="Porphobilinogen deaminase"/>
    <property type="match status" value="1"/>
</dbReference>
<dbReference type="FunFam" id="3.40.190.10:FF:000005">
    <property type="entry name" value="Porphobilinogen deaminase"/>
    <property type="match status" value="1"/>
</dbReference>
<dbReference type="Gene3D" id="3.40.190.10">
    <property type="entry name" value="Periplasmic binding protein-like II"/>
    <property type="match status" value="2"/>
</dbReference>
<dbReference type="Gene3D" id="3.30.160.40">
    <property type="entry name" value="Porphobilinogen deaminase, C-terminal domain"/>
    <property type="match status" value="1"/>
</dbReference>
<dbReference type="HAMAP" id="MF_00260">
    <property type="entry name" value="Porphobil_deam"/>
    <property type="match status" value="1"/>
</dbReference>
<dbReference type="InterPro" id="IPR000860">
    <property type="entry name" value="HemC"/>
</dbReference>
<dbReference type="InterPro" id="IPR022419">
    <property type="entry name" value="Porphobilin_deaminase_cofac_BS"/>
</dbReference>
<dbReference type="InterPro" id="IPR022417">
    <property type="entry name" value="Porphobilin_deaminase_N"/>
</dbReference>
<dbReference type="InterPro" id="IPR022418">
    <property type="entry name" value="Porphobilinogen_deaminase_C"/>
</dbReference>
<dbReference type="InterPro" id="IPR036803">
    <property type="entry name" value="Porphobilinogen_deaminase_C_sf"/>
</dbReference>
<dbReference type="NCBIfam" id="TIGR00212">
    <property type="entry name" value="hemC"/>
    <property type="match status" value="1"/>
</dbReference>
<dbReference type="PANTHER" id="PTHR11557">
    <property type="entry name" value="PORPHOBILINOGEN DEAMINASE"/>
    <property type="match status" value="1"/>
</dbReference>
<dbReference type="PANTHER" id="PTHR11557:SF0">
    <property type="entry name" value="PORPHOBILINOGEN DEAMINASE"/>
    <property type="match status" value="1"/>
</dbReference>
<dbReference type="Pfam" id="PF01379">
    <property type="entry name" value="Porphobil_deam"/>
    <property type="match status" value="1"/>
</dbReference>
<dbReference type="Pfam" id="PF03900">
    <property type="entry name" value="Porphobil_deamC"/>
    <property type="match status" value="1"/>
</dbReference>
<dbReference type="PIRSF" id="PIRSF001438">
    <property type="entry name" value="4pyrrol_synth_OHMeBilane_synth"/>
    <property type="match status" value="1"/>
</dbReference>
<dbReference type="PRINTS" id="PR00151">
    <property type="entry name" value="PORPHBDMNASE"/>
</dbReference>
<dbReference type="SUPFAM" id="SSF53850">
    <property type="entry name" value="Periplasmic binding protein-like II"/>
    <property type="match status" value="1"/>
</dbReference>
<dbReference type="SUPFAM" id="SSF54782">
    <property type="entry name" value="Porphobilinogen deaminase (hydroxymethylbilane synthase), C-terminal domain"/>
    <property type="match status" value="1"/>
</dbReference>
<dbReference type="PROSITE" id="PS00533">
    <property type="entry name" value="PORPHOBILINOGEN_DEAM"/>
    <property type="match status" value="1"/>
</dbReference>
<organism>
    <name type="scientific">Bacillus cereus (strain G9842)</name>
    <dbReference type="NCBI Taxonomy" id="405531"/>
    <lineage>
        <taxon>Bacteria</taxon>
        <taxon>Bacillati</taxon>
        <taxon>Bacillota</taxon>
        <taxon>Bacilli</taxon>
        <taxon>Bacillales</taxon>
        <taxon>Bacillaceae</taxon>
        <taxon>Bacillus</taxon>
        <taxon>Bacillus cereus group</taxon>
    </lineage>
</organism>
<gene>
    <name evidence="1" type="primary">hemC</name>
    <name type="ordered locus">BCG9842_B0652</name>
</gene>
<evidence type="ECO:0000255" key="1">
    <source>
        <dbReference type="HAMAP-Rule" id="MF_00260"/>
    </source>
</evidence>
<feature type="chain" id="PRO_1000119208" description="Porphobilinogen deaminase">
    <location>
        <begin position="1"/>
        <end position="309"/>
    </location>
</feature>
<feature type="modified residue" description="S-(dipyrrolylmethanemethyl)cysteine" evidence="1">
    <location>
        <position position="241"/>
    </location>
</feature>
<accession>B7IIX5</accession>
<reference key="1">
    <citation type="submission" date="2008-10" db="EMBL/GenBank/DDBJ databases">
        <title>Genome sequence of Bacillus cereus G9842.</title>
        <authorList>
            <person name="Dodson R.J."/>
            <person name="Durkin A.S."/>
            <person name="Rosovitz M.J."/>
            <person name="Rasko D.A."/>
            <person name="Hoffmaster A."/>
            <person name="Ravel J."/>
            <person name="Sutton G."/>
        </authorList>
    </citation>
    <scope>NUCLEOTIDE SEQUENCE [LARGE SCALE GENOMIC DNA]</scope>
    <source>
        <strain>G9842</strain>
    </source>
</reference>
<protein>
    <recommendedName>
        <fullName evidence="1">Porphobilinogen deaminase</fullName>
        <shortName evidence="1">PBG</shortName>
        <ecNumber evidence="1">2.5.1.61</ecNumber>
    </recommendedName>
    <alternativeName>
        <fullName evidence="1">Hydroxymethylbilane synthase</fullName>
        <shortName evidence="1">HMBS</shortName>
    </alternativeName>
    <alternativeName>
        <fullName evidence="1">Pre-uroporphyrinogen synthase</fullName>
    </alternativeName>
</protein>
<sequence length="309" mass="33806">MRKIIVGSRKSKLALTQTNWFIDQLKALGLPYEFEVKEIVTKGDVILDVTLSKVGGKGLFVKEIEHALLTKEIDMAVHSMKDMPAVLPEGLMIGCTPKRVDPRDAFISKNGASFKELAEGAILGTSSLRRSAQLLAARPDLQVKWIRGNIDTRLRKLKEEDYDAIILATAGLQRMGWDDEVITEHLDETLCVPAVGQGALAIECREDDKDLLQLLAHMNDAITERTVAAERVFLHKLEGGCQVPIAGYATLKENDTIELTALVGSMDGSVLLKETVVGTNPEEVGLEAAGRLIKQGAKELILAANKEQQ</sequence>